<proteinExistence type="inferred from homology"/>
<reference key="1">
    <citation type="journal article" date="2001" name="Proc. Natl. Acad. Sci. U.S.A.">
        <title>Complete genomic sequence of Pasteurella multocida Pm70.</title>
        <authorList>
            <person name="May B.J."/>
            <person name="Zhang Q."/>
            <person name="Li L.L."/>
            <person name="Paustian M.L."/>
            <person name="Whittam T.S."/>
            <person name="Kapur V."/>
        </authorList>
    </citation>
    <scope>NUCLEOTIDE SEQUENCE [LARGE SCALE GENOMIC DNA]</scope>
    <source>
        <strain>Pm70</strain>
    </source>
</reference>
<dbReference type="EC" id="4.2.1.11" evidence="1"/>
<dbReference type="EMBL" id="AE004439">
    <property type="protein sequence ID" value="AAK03955.1"/>
    <property type="molecule type" value="Genomic_DNA"/>
</dbReference>
<dbReference type="RefSeq" id="WP_005724946.1">
    <property type="nucleotide sequence ID" value="NC_002663.1"/>
</dbReference>
<dbReference type="SMR" id="P57975"/>
<dbReference type="STRING" id="272843.PM1871"/>
<dbReference type="EnsemblBacteria" id="AAK03955">
    <property type="protein sequence ID" value="AAK03955"/>
    <property type="gene ID" value="PM1871"/>
</dbReference>
<dbReference type="GeneID" id="77207215"/>
<dbReference type="KEGG" id="pmu:PM1871"/>
<dbReference type="PATRIC" id="fig|272843.6.peg.1893"/>
<dbReference type="HOGENOM" id="CLU_031223_2_1_6"/>
<dbReference type="OrthoDB" id="9804716at2"/>
<dbReference type="UniPathway" id="UPA00109">
    <property type="reaction ID" value="UER00187"/>
</dbReference>
<dbReference type="Proteomes" id="UP000000809">
    <property type="component" value="Chromosome"/>
</dbReference>
<dbReference type="GO" id="GO:0009986">
    <property type="term" value="C:cell surface"/>
    <property type="evidence" value="ECO:0007669"/>
    <property type="project" value="UniProtKB-SubCell"/>
</dbReference>
<dbReference type="GO" id="GO:0005576">
    <property type="term" value="C:extracellular region"/>
    <property type="evidence" value="ECO:0007669"/>
    <property type="project" value="UniProtKB-SubCell"/>
</dbReference>
<dbReference type="GO" id="GO:0000015">
    <property type="term" value="C:phosphopyruvate hydratase complex"/>
    <property type="evidence" value="ECO:0007669"/>
    <property type="project" value="InterPro"/>
</dbReference>
<dbReference type="GO" id="GO:0000287">
    <property type="term" value="F:magnesium ion binding"/>
    <property type="evidence" value="ECO:0007669"/>
    <property type="project" value="UniProtKB-UniRule"/>
</dbReference>
<dbReference type="GO" id="GO:0004634">
    <property type="term" value="F:phosphopyruvate hydratase activity"/>
    <property type="evidence" value="ECO:0007669"/>
    <property type="project" value="UniProtKB-UniRule"/>
</dbReference>
<dbReference type="GO" id="GO:0006096">
    <property type="term" value="P:glycolytic process"/>
    <property type="evidence" value="ECO:0007669"/>
    <property type="project" value="UniProtKB-UniRule"/>
</dbReference>
<dbReference type="CDD" id="cd03313">
    <property type="entry name" value="enolase"/>
    <property type="match status" value="1"/>
</dbReference>
<dbReference type="FunFam" id="3.20.20.120:FF:000001">
    <property type="entry name" value="Enolase"/>
    <property type="match status" value="1"/>
</dbReference>
<dbReference type="FunFam" id="3.30.390.10:FF:000001">
    <property type="entry name" value="Enolase"/>
    <property type="match status" value="1"/>
</dbReference>
<dbReference type="Gene3D" id="3.20.20.120">
    <property type="entry name" value="Enolase-like C-terminal domain"/>
    <property type="match status" value="1"/>
</dbReference>
<dbReference type="Gene3D" id="3.30.390.10">
    <property type="entry name" value="Enolase-like, N-terminal domain"/>
    <property type="match status" value="1"/>
</dbReference>
<dbReference type="HAMAP" id="MF_00318">
    <property type="entry name" value="Enolase"/>
    <property type="match status" value="1"/>
</dbReference>
<dbReference type="InterPro" id="IPR000941">
    <property type="entry name" value="Enolase"/>
</dbReference>
<dbReference type="InterPro" id="IPR036849">
    <property type="entry name" value="Enolase-like_C_sf"/>
</dbReference>
<dbReference type="InterPro" id="IPR029017">
    <property type="entry name" value="Enolase-like_N"/>
</dbReference>
<dbReference type="InterPro" id="IPR020810">
    <property type="entry name" value="Enolase_C"/>
</dbReference>
<dbReference type="InterPro" id="IPR020809">
    <property type="entry name" value="Enolase_CS"/>
</dbReference>
<dbReference type="InterPro" id="IPR020811">
    <property type="entry name" value="Enolase_N"/>
</dbReference>
<dbReference type="NCBIfam" id="TIGR01060">
    <property type="entry name" value="eno"/>
    <property type="match status" value="1"/>
</dbReference>
<dbReference type="PANTHER" id="PTHR11902">
    <property type="entry name" value="ENOLASE"/>
    <property type="match status" value="1"/>
</dbReference>
<dbReference type="PANTHER" id="PTHR11902:SF1">
    <property type="entry name" value="ENOLASE"/>
    <property type="match status" value="1"/>
</dbReference>
<dbReference type="Pfam" id="PF00113">
    <property type="entry name" value="Enolase_C"/>
    <property type="match status" value="1"/>
</dbReference>
<dbReference type="Pfam" id="PF03952">
    <property type="entry name" value="Enolase_N"/>
    <property type="match status" value="1"/>
</dbReference>
<dbReference type="PIRSF" id="PIRSF001400">
    <property type="entry name" value="Enolase"/>
    <property type="match status" value="1"/>
</dbReference>
<dbReference type="PRINTS" id="PR00148">
    <property type="entry name" value="ENOLASE"/>
</dbReference>
<dbReference type="SFLD" id="SFLDS00001">
    <property type="entry name" value="Enolase"/>
    <property type="match status" value="1"/>
</dbReference>
<dbReference type="SFLD" id="SFLDF00002">
    <property type="entry name" value="enolase"/>
    <property type="match status" value="1"/>
</dbReference>
<dbReference type="SMART" id="SM01192">
    <property type="entry name" value="Enolase_C"/>
    <property type="match status" value="1"/>
</dbReference>
<dbReference type="SMART" id="SM01193">
    <property type="entry name" value="Enolase_N"/>
    <property type="match status" value="1"/>
</dbReference>
<dbReference type="SUPFAM" id="SSF51604">
    <property type="entry name" value="Enolase C-terminal domain-like"/>
    <property type="match status" value="1"/>
</dbReference>
<dbReference type="SUPFAM" id="SSF54826">
    <property type="entry name" value="Enolase N-terminal domain-like"/>
    <property type="match status" value="1"/>
</dbReference>
<dbReference type="PROSITE" id="PS00164">
    <property type="entry name" value="ENOLASE"/>
    <property type="match status" value="1"/>
</dbReference>
<sequence>MAKIVKVIGREIIDSRGNPTVEAEVHLEGGFVGLAAAPSGASTGSREALELRDGDKARFLGKGVLKAVAAVNNEIAQALVGKDATNQAEIDQIMIDLDGTENKSKFGANAILAVSLANAKAAAAAKGMPLFAWIAELNGTPGQYSMPLPMMNIINGGEHADNNVDIQEFMIQPVGAKTLKEALRIGAEVFHNLAKVLKGKGLSTAVGDEGGFAPNLESNAAALACIKEAVEKAGYVLGKDVTLAMDCASSEFYNKENGMYEMKGEGKSFTSQEFTHYLEELCKEYPIVSIEDGQDESDWEGFAYQTKVLGDKVQLVGDDLFVTNTKILKEGIEKGIANSILIKFNQIGSLTETLAAIKMAKDAGYTAVISHRSGETEDATIADLAVGTAAGQIKTGSMSRSDRIAKYNQLIRIEEALGDKAPFLGLKAVKGQA</sequence>
<comment type="function">
    <text evidence="1">Catalyzes the reversible conversion of 2-phosphoglycerate (2-PG) into phosphoenolpyruvate (PEP). It is essential for the degradation of carbohydrates via glycolysis.</text>
</comment>
<comment type="catalytic activity">
    <reaction evidence="1">
        <text>(2R)-2-phosphoglycerate = phosphoenolpyruvate + H2O</text>
        <dbReference type="Rhea" id="RHEA:10164"/>
        <dbReference type="ChEBI" id="CHEBI:15377"/>
        <dbReference type="ChEBI" id="CHEBI:58289"/>
        <dbReference type="ChEBI" id="CHEBI:58702"/>
        <dbReference type="EC" id="4.2.1.11"/>
    </reaction>
</comment>
<comment type="cofactor">
    <cofactor evidence="1">
        <name>Mg(2+)</name>
        <dbReference type="ChEBI" id="CHEBI:18420"/>
    </cofactor>
    <text evidence="1">Binds a second Mg(2+) ion via substrate during catalysis.</text>
</comment>
<comment type="pathway">
    <text evidence="1">Carbohydrate degradation; glycolysis; pyruvate from D-glyceraldehyde 3-phosphate: step 4/5.</text>
</comment>
<comment type="subunit">
    <text evidence="1">Component of the RNA degradosome, a multiprotein complex involved in RNA processing and mRNA degradation.</text>
</comment>
<comment type="subcellular location">
    <subcellularLocation>
        <location evidence="1">Cytoplasm</location>
    </subcellularLocation>
    <subcellularLocation>
        <location evidence="1">Secreted</location>
    </subcellularLocation>
    <subcellularLocation>
        <location evidence="1">Cell surface</location>
    </subcellularLocation>
    <text evidence="1">Fractions of enolase are present in both the cytoplasm and on the cell surface.</text>
</comment>
<comment type="similarity">
    <text evidence="1">Belongs to the enolase family.</text>
</comment>
<name>ENO_PASMU</name>
<keyword id="KW-0963">Cytoplasm</keyword>
<keyword id="KW-0324">Glycolysis</keyword>
<keyword id="KW-0456">Lyase</keyword>
<keyword id="KW-0460">Magnesium</keyword>
<keyword id="KW-0479">Metal-binding</keyword>
<keyword id="KW-1185">Reference proteome</keyword>
<keyword id="KW-0964">Secreted</keyword>
<organism>
    <name type="scientific">Pasteurella multocida (strain Pm70)</name>
    <dbReference type="NCBI Taxonomy" id="272843"/>
    <lineage>
        <taxon>Bacteria</taxon>
        <taxon>Pseudomonadati</taxon>
        <taxon>Pseudomonadota</taxon>
        <taxon>Gammaproteobacteria</taxon>
        <taxon>Pasteurellales</taxon>
        <taxon>Pasteurellaceae</taxon>
        <taxon>Pasteurella</taxon>
    </lineage>
</organism>
<feature type="chain" id="PRO_0000133941" description="Enolase">
    <location>
        <begin position="1"/>
        <end position="433"/>
    </location>
</feature>
<feature type="active site" description="Proton donor" evidence="1">
    <location>
        <position position="209"/>
    </location>
</feature>
<feature type="active site" description="Proton acceptor" evidence="1">
    <location>
        <position position="343"/>
    </location>
</feature>
<feature type="binding site" evidence="1">
    <location>
        <position position="167"/>
    </location>
    <ligand>
        <name>(2R)-2-phosphoglycerate</name>
        <dbReference type="ChEBI" id="CHEBI:58289"/>
    </ligand>
</feature>
<feature type="binding site" evidence="1">
    <location>
        <position position="246"/>
    </location>
    <ligand>
        <name>Mg(2+)</name>
        <dbReference type="ChEBI" id="CHEBI:18420"/>
    </ligand>
</feature>
<feature type="binding site" evidence="1">
    <location>
        <position position="291"/>
    </location>
    <ligand>
        <name>Mg(2+)</name>
        <dbReference type="ChEBI" id="CHEBI:18420"/>
    </ligand>
</feature>
<feature type="binding site" evidence="1">
    <location>
        <position position="318"/>
    </location>
    <ligand>
        <name>Mg(2+)</name>
        <dbReference type="ChEBI" id="CHEBI:18420"/>
    </ligand>
</feature>
<feature type="binding site" evidence="1">
    <location>
        <position position="343"/>
    </location>
    <ligand>
        <name>(2R)-2-phosphoglycerate</name>
        <dbReference type="ChEBI" id="CHEBI:58289"/>
    </ligand>
</feature>
<feature type="binding site" evidence="1">
    <location>
        <position position="372"/>
    </location>
    <ligand>
        <name>(2R)-2-phosphoglycerate</name>
        <dbReference type="ChEBI" id="CHEBI:58289"/>
    </ligand>
</feature>
<feature type="binding site" evidence="1">
    <location>
        <position position="373"/>
    </location>
    <ligand>
        <name>(2R)-2-phosphoglycerate</name>
        <dbReference type="ChEBI" id="CHEBI:58289"/>
    </ligand>
</feature>
<feature type="binding site" evidence="1">
    <location>
        <position position="394"/>
    </location>
    <ligand>
        <name>(2R)-2-phosphoglycerate</name>
        <dbReference type="ChEBI" id="CHEBI:58289"/>
    </ligand>
</feature>
<protein>
    <recommendedName>
        <fullName evidence="1">Enolase</fullName>
        <ecNumber evidence="1">4.2.1.11</ecNumber>
    </recommendedName>
    <alternativeName>
        <fullName evidence="1">2-phospho-D-glycerate hydro-lyase</fullName>
    </alternativeName>
    <alternativeName>
        <fullName evidence="1">2-phosphoglycerate dehydratase</fullName>
    </alternativeName>
</protein>
<evidence type="ECO:0000255" key="1">
    <source>
        <dbReference type="HAMAP-Rule" id="MF_00318"/>
    </source>
</evidence>
<gene>
    <name evidence="1" type="primary">eno</name>
    <name type="ordered locus">PM1871</name>
</gene>
<accession>P57975</accession>